<proteinExistence type="inferred from homology"/>
<organism>
    <name type="scientific">Culex quinquefasciatus</name>
    <name type="common">Southern house mosquito</name>
    <name type="synonym">Culex pungens</name>
    <dbReference type="NCBI Taxonomy" id="7176"/>
    <lineage>
        <taxon>Eukaryota</taxon>
        <taxon>Metazoa</taxon>
        <taxon>Ecdysozoa</taxon>
        <taxon>Arthropoda</taxon>
        <taxon>Hexapoda</taxon>
        <taxon>Insecta</taxon>
        <taxon>Pterygota</taxon>
        <taxon>Neoptera</taxon>
        <taxon>Endopterygota</taxon>
        <taxon>Diptera</taxon>
        <taxon>Nematocera</taxon>
        <taxon>Culicoidea</taxon>
        <taxon>Culicidae</taxon>
        <taxon>Culicinae</taxon>
        <taxon>Culicini</taxon>
        <taxon>Culex</taxon>
        <taxon>Culex</taxon>
    </lineage>
</organism>
<protein>
    <recommendedName>
        <fullName>Single-pass membrane and coiled-coil domain-containing protein 4 homolog</fullName>
    </recommendedName>
</protein>
<feature type="chain" id="PRO_0000365553" description="Single-pass membrane and coiled-coil domain-containing protein 4 homolog">
    <location>
        <begin position="1"/>
        <end position="60"/>
    </location>
</feature>
<feature type="transmembrane region" description="Helical" evidence="1">
    <location>
        <begin position="30"/>
        <end position="50"/>
    </location>
</feature>
<feature type="region of interest" description="Disordered" evidence="2">
    <location>
        <begin position="1"/>
        <end position="22"/>
    </location>
</feature>
<feature type="coiled-coil region" evidence="1">
    <location>
        <begin position="8"/>
        <end position="34"/>
    </location>
</feature>
<feature type="compositionally biased region" description="Basic and acidic residues" evidence="2">
    <location>
        <begin position="8"/>
        <end position="22"/>
    </location>
</feature>
<reference key="1">
    <citation type="submission" date="2007-03" db="EMBL/GenBank/DDBJ databases">
        <title>Annotation of Culex pipiens quinquefasciatus.</title>
        <authorList>
            <consortium name="The Broad Institute Genome Sequencing Platform"/>
            <person name="Atkinson P.W."/>
            <person name="Hemingway J."/>
            <person name="Christensen B.M."/>
            <person name="Higgs S."/>
            <person name="Kodira C.D."/>
            <person name="Hannick L.I."/>
            <person name="Megy K."/>
            <person name="O'Leary S.B."/>
            <person name="Pearson M."/>
            <person name="Haas B.J."/>
            <person name="Mauceli E."/>
            <person name="Wortman J.R."/>
            <person name="Lee N.H."/>
            <person name="Guigo R."/>
            <person name="Stanke M."/>
            <person name="Alvarado L."/>
            <person name="Amedeo P."/>
            <person name="Antoine C.H."/>
            <person name="Arensburger P."/>
            <person name="Bidwell S.L."/>
            <person name="Crawford M."/>
            <person name="Camaro F."/>
            <person name="Devon K."/>
            <person name="Engels R."/>
            <person name="Hammond M."/>
            <person name="Howarth C."/>
            <person name="Koehrsen M."/>
            <person name="Lawson D."/>
            <person name="Montgomery P."/>
            <person name="Nene V."/>
            <person name="Nusbaum C."/>
            <person name="Puiu D."/>
            <person name="Romero-Severson J."/>
            <person name="Severson D.W."/>
            <person name="Shumway M."/>
            <person name="Sisk P."/>
            <person name="Stolte C."/>
            <person name="Zeng Q."/>
            <person name="Eisenstadt E."/>
            <person name="Fraser-Liggett C.M."/>
            <person name="Strausberg R."/>
            <person name="Galagan J."/>
            <person name="Birren B."/>
            <person name="Collins F.H."/>
        </authorList>
    </citation>
    <scope>NUCLEOTIDE SEQUENCE [LARGE SCALE GENOMIC DNA]</scope>
    <source>
        <strain>JHB</strain>
    </source>
</reference>
<name>SMCO4_CULQU</name>
<accession>B0WN94</accession>
<keyword id="KW-0175">Coiled coil</keyword>
<keyword id="KW-0472">Membrane</keyword>
<keyword id="KW-1185">Reference proteome</keyword>
<keyword id="KW-0812">Transmembrane</keyword>
<keyword id="KW-1133">Transmembrane helix</keyword>
<comment type="subcellular location">
    <subcellularLocation>
        <location evidence="3">Membrane</location>
        <topology evidence="3">Single-pass membrane protein</topology>
    </subcellularLocation>
</comment>
<comment type="similarity">
    <text evidence="3">Belongs to the SMCO4 family.</text>
</comment>
<gene>
    <name type="ORF">CPIJ008582</name>
</gene>
<dbReference type="EMBL" id="DS232008">
    <property type="protein sequence ID" value="EDS31534.1"/>
    <property type="molecule type" value="Genomic_DNA"/>
</dbReference>
<dbReference type="SMR" id="B0WN94"/>
<dbReference type="FunCoup" id="B0WN94">
    <property type="interactions" value="1"/>
</dbReference>
<dbReference type="STRING" id="7176.B0WN94"/>
<dbReference type="EnsemblMetazoa" id="CPIJ008582-RA">
    <property type="protein sequence ID" value="CPIJ008582-PA"/>
    <property type="gene ID" value="CPIJ008582"/>
</dbReference>
<dbReference type="EnsemblMetazoa" id="CQUJHB013921.R21596">
    <property type="protein sequence ID" value="CQUJHB013921.P21596"/>
    <property type="gene ID" value="CQUJHB013921"/>
</dbReference>
<dbReference type="EnsemblMetazoa" id="XM_001850126.2">
    <property type="protein sequence ID" value="XP_001850178.1"/>
    <property type="gene ID" value="LOC6040843"/>
</dbReference>
<dbReference type="KEGG" id="cqu:CpipJ_CPIJ008582"/>
<dbReference type="VEuPathDB" id="VectorBase:CPIJ008582"/>
<dbReference type="VEuPathDB" id="VectorBase:CQUJHB013921"/>
<dbReference type="eggNOG" id="ENOG502S7F4">
    <property type="taxonomic scope" value="Eukaryota"/>
</dbReference>
<dbReference type="HOGENOM" id="CLU_209950_1_0_1"/>
<dbReference type="InParanoid" id="B0WN94"/>
<dbReference type="OrthoDB" id="10266771at2759"/>
<dbReference type="PhylomeDB" id="B0WN94"/>
<dbReference type="Proteomes" id="UP000002320">
    <property type="component" value="Unassembled WGS sequence"/>
</dbReference>
<dbReference type="GO" id="GO:0016020">
    <property type="term" value="C:membrane"/>
    <property type="evidence" value="ECO:0007669"/>
    <property type="project" value="UniProtKB-SubCell"/>
</dbReference>
<dbReference type="InterPro" id="IPR027960">
    <property type="entry name" value="DUF4519"/>
</dbReference>
<dbReference type="PANTHER" id="PTHR34644">
    <property type="entry name" value="SINGLE-PASS MEMBRANE AND COILED-COIL DOMAIN-CONTAINING PROTEIN 4"/>
    <property type="match status" value="1"/>
</dbReference>
<dbReference type="PANTHER" id="PTHR34644:SF2">
    <property type="entry name" value="SINGLE-PASS MEMBRANE AND COILED-COIL DOMAIN-CONTAINING PROTEIN 4"/>
    <property type="match status" value="1"/>
</dbReference>
<dbReference type="Pfam" id="PF15012">
    <property type="entry name" value="DUF4519"/>
    <property type="match status" value="1"/>
</dbReference>
<sequence>MRKLRGGQTRETRKQKQERREENQKIQQQLKTIVLPICGVVFLCIVAYVFLKTRPRFEEL</sequence>
<evidence type="ECO:0000255" key="1"/>
<evidence type="ECO:0000256" key="2">
    <source>
        <dbReference type="SAM" id="MobiDB-lite"/>
    </source>
</evidence>
<evidence type="ECO:0000305" key="3"/>